<comment type="function">
    <text evidence="1">Catalyzes the formation of the alpha-1,6-glucosidic linkages in glycogen by scission of a 1,4-alpha-linked oligosaccharide from growing alpha-1,4-glucan chains and the subsequent attachment of the oligosaccharide to the alpha-1,6 position.</text>
</comment>
<comment type="catalytic activity">
    <reaction evidence="1">
        <text>Transfers a segment of a (1-&gt;4)-alpha-D-glucan chain to a primary hydroxy group in a similar glucan chain.</text>
        <dbReference type="EC" id="2.4.1.18"/>
    </reaction>
</comment>
<comment type="pathway">
    <text evidence="1">Glycan biosynthesis; glycogen biosynthesis.</text>
</comment>
<comment type="subunit">
    <text evidence="1">Monomer.</text>
</comment>
<comment type="similarity">
    <text evidence="1">Belongs to the glycosyl hydrolase 13 family. GlgB subfamily.</text>
</comment>
<protein>
    <recommendedName>
        <fullName evidence="1">1,4-alpha-glucan branching enzyme GlgB</fullName>
        <ecNumber evidence="1">2.4.1.18</ecNumber>
    </recommendedName>
    <alternativeName>
        <fullName evidence="1">1,4-alpha-D-glucan:1,4-alpha-D-glucan 6-glucosyl-transferase</fullName>
    </alternativeName>
    <alternativeName>
        <fullName evidence="1">Alpha-(1-&gt;4)-glucan branching enzyme</fullName>
    </alternativeName>
    <alternativeName>
        <fullName evidence="1">Glycogen branching enzyme</fullName>
        <shortName evidence="1">BE</shortName>
    </alternativeName>
</protein>
<keyword id="KW-0119">Carbohydrate metabolism</keyword>
<keyword id="KW-0320">Glycogen biosynthesis</keyword>
<keyword id="KW-0321">Glycogen metabolism</keyword>
<keyword id="KW-0328">Glycosyltransferase</keyword>
<keyword id="KW-0808">Transferase</keyword>
<proteinExistence type="inferred from homology"/>
<feature type="chain" id="PRO_1000131811" description="1,4-alpha-glucan branching enzyme GlgB">
    <location>
        <begin position="1"/>
        <end position="645"/>
    </location>
</feature>
<feature type="region of interest" description="Disordered" evidence="2">
    <location>
        <begin position="619"/>
        <end position="645"/>
    </location>
</feature>
<feature type="compositionally biased region" description="Polar residues" evidence="2">
    <location>
        <begin position="636"/>
        <end position="645"/>
    </location>
</feature>
<feature type="active site" description="Nucleophile" evidence="1">
    <location>
        <position position="309"/>
    </location>
</feature>
<feature type="active site" description="Proton donor" evidence="1">
    <location>
        <position position="352"/>
    </location>
</feature>
<evidence type="ECO:0000255" key="1">
    <source>
        <dbReference type="HAMAP-Rule" id="MF_00685"/>
    </source>
</evidence>
<evidence type="ECO:0000256" key="2">
    <source>
        <dbReference type="SAM" id="MobiDB-lite"/>
    </source>
</evidence>
<organism>
    <name type="scientific">Bacillus mycoides (strain KBAB4)</name>
    <name type="common">Bacillus weihenstephanensis</name>
    <dbReference type="NCBI Taxonomy" id="315730"/>
    <lineage>
        <taxon>Bacteria</taxon>
        <taxon>Bacillati</taxon>
        <taxon>Bacillota</taxon>
        <taxon>Bacilli</taxon>
        <taxon>Bacillales</taxon>
        <taxon>Bacillaceae</taxon>
        <taxon>Bacillus</taxon>
        <taxon>Bacillus cereus group</taxon>
    </lineage>
</organism>
<sequence>MDVINCEEVKRDEFHTEKYYDSYNIFGAHIVTEDGMRGVRCTVWAPHAKAMSVVGDFNEWDYEQHKMLQVTEEGIWSLFVPHIEENEIYKYAIETMDGDVILKADPYAVYAEVRPNTASVVFDIEGYEWNDKNWIRKRKKKSIYKEAMTVYELHFGSWKKKEDGALYSYREMAEELIPYVVEHQFTHIEIMPLVEHPYDRSWGYQGTGYYAATSRFGTPHDLMYFVDECHKYGIGVILDWVPGHFCKDAHGLYLFDGTPTYEYKDRDVQENLVWGTVNFDLGKREVRNFLISNALFWMKYFHIDGFRVDAVANMLYWNKEGKEQSNEHAVSFLRELNEAVFAEDEEFLMTAEDSTAWPLVTAPTYEGGLGFNYKWNMGWMNDVLKYMECAPEYRKYIHEKMTFSLIYAHSENFILPLSHDEVVHGKKSLLNKMPGDYWDKFAQLRLLYGYFFTHPGKKLLFMGGEFGQFDEWKDLEDLDWNLHDFEMHRNMHDYFKELIALYKRSKPLWQLDHSPEGFQWIDANNNEQSIFSFIRQGDKQEDALVVVCNFTKATYENYKVGVPDFEYYNEILNSDSAQYGGSGQVNKKRLKTILEPYHNQAAHVEITIPPFGVSILRPVKTRKGSKKQDGSKTKVRSNVTSRGKR</sequence>
<dbReference type="EC" id="2.4.1.18" evidence="1"/>
<dbReference type="EMBL" id="CP000903">
    <property type="protein sequence ID" value="ABY45863.1"/>
    <property type="molecule type" value="Genomic_DNA"/>
</dbReference>
<dbReference type="RefSeq" id="WP_012261905.1">
    <property type="nucleotide sequence ID" value="NC_010184.1"/>
</dbReference>
<dbReference type="SMR" id="A9VMV8"/>
<dbReference type="CAZy" id="CBM48">
    <property type="family name" value="Carbohydrate-Binding Module Family 48"/>
</dbReference>
<dbReference type="CAZy" id="GH13">
    <property type="family name" value="Glycoside Hydrolase Family 13"/>
</dbReference>
<dbReference type="KEGG" id="bwe:BcerKBAB4_4710"/>
<dbReference type="eggNOG" id="COG0296">
    <property type="taxonomic scope" value="Bacteria"/>
</dbReference>
<dbReference type="HOGENOM" id="CLU_004245_4_0_9"/>
<dbReference type="UniPathway" id="UPA00164"/>
<dbReference type="Proteomes" id="UP000002154">
    <property type="component" value="Chromosome"/>
</dbReference>
<dbReference type="GO" id="GO:0005829">
    <property type="term" value="C:cytosol"/>
    <property type="evidence" value="ECO:0007669"/>
    <property type="project" value="TreeGrafter"/>
</dbReference>
<dbReference type="GO" id="GO:0003844">
    <property type="term" value="F:1,4-alpha-glucan branching enzyme activity"/>
    <property type="evidence" value="ECO:0007669"/>
    <property type="project" value="UniProtKB-UniRule"/>
</dbReference>
<dbReference type="GO" id="GO:0043169">
    <property type="term" value="F:cation binding"/>
    <property type="evidence" value="ECO:0007669"/>
    <property type="project" value="InterPro"/>
</dbReference>
<dbReference type="GO" id="GO:0004553">
    <property type="term" value="F:hydrolase activity, hydrolyzing O-glycosyl compounds"/>
    <property type="evidence" value="ECO:0007669"/>
    <property type="project" value="InterPro"/>
</dbReference>
<dbReference type="GO" id="GO:0005978">
    <property type="term" value="P:glycogen biosynthetic process"/>
    <property type="evidence" value="ECO:0007669"/>
    <property type="project" value="UniProtKB-UniRule"/>
</dbReference>
<dbReference type="CDD" id="cd11322">
    <property type="entry name" value="AmyAc_Glg_BE"/>
    <property type="match status" value="1"/>
</dbReference>
<dbReference type="CDD" id="cd02855">
    <property type="entry name" value="E_set_GBE_prok_N"/>
    <property type="match status" value="1"/>
</dbReference>
<dbReference type="FunFam" id="2.60.40.10:FF:000169">
    <property type="entry name" value="1,4-alpha-glucan branching enzyme GlgB"/>
    <property type="match status" value="1"/>
</dbReference>
<dbReference type="FunFam" id="2.60.40.1180:FF:000002">
    <property type="entry name" value="1,4-alpha-glucan branching enzyme GlgB"/>
    <property type="match status" value="1"/>
</dbReference>
<dbReference type="FunFam" id="3.20.20.80:FF:000003">
    <property type="entry name" value="1,4-alpha-glucan branching enzyme GlgB"/>
    <property type="match status" value="1"/>
</dbReference>
<dbReference type="Gene3D" id="3.20.20.80">
    <property type="entry name" value="Glycosidases"/>
    <property type="match status" value="1"/>
</dbReference>
<dbReference type="Gene3D" id="2.60.40.1180">
    <property type="entry name" value="Golgi alpha-mannosidase II"/>
    <property type="match status" value="1"/>
</dbReference>
<dbReference type="Gene3D" id="2.60.40.10">
    <property type="entry name" value="Immunoglobulins"/>
    <property type="match status" value="1"/>
</dbReference>
<dbReference type="HAMAP" id="MF_00685">
    <property type="entry name" value="GlgB"/>
    <property type="match status" value="1"/>
</dbReference>
<dbReference type="InterPro" id="IPR006048">
    <property type="entry name" value="A-amylase/branching_C"/>
</dbReference>
<dbReference type="InterPro" id="IPR037439">
    <property type="entry name" value="Branching_enzy"/>
</dbReference>
<dbReference type="InterPro" id="IPR006407">
    <property type="entry name" value="GlgB"/>
</dbReference>
<dbReference type="InterPro" id="IPR044143">
    <property type="entry name" value="GlgB_N_E_set_prok"/>
</dbReference>
<dbReference type="InterPro" id="IPR006047">
    <property type="entry name" value="Glyco_hydro_13_cat_dom"/>
</dbReference>
<dbReference type="InterPro" id="IPR004193">
    <property type="entry name" value="Glyco_hydro_13_N"/>
</dbReference>
<dbReference type="InterPro" id="IPR013780">
    <property type="entry name" value="Glyco_hydro_b"/>
</dbReference>
<dbReference type="InterPro" id="IPR017853">
    <property type="entry name" value="Glycoside_hydrolase_SF"/>
</dbReference>
<dbReference type="InterPro" id="IPR013783">
    <property type="entry name" value="Ig-like_fold"/>
</dbReference>
<dbReference type="NCBIfam" id="TIGR01515">
    <property type="entry name" value="branching_enzym"/>
    <property type="match status" value="1"/>
</dbReference>
<dbReference type="NCBIfam" id="NF003811">
    <property type="entry name" value="PRK05402.1"/>
    <property type="match status" value="1"/>
</dbReference>
<dbReference type="NCBIfam" id="NF008967">
    <property type="entry name" value="PRK12313.1"/>
    <property type="match status" value="1"/>
</dbReference>
<dbReference type="PANTHER" id="PTHR43651">
    <property type="entry name" value="1,4-ALPHA-GLUCAN-BRANCHING ENZYME"/>
    <property type="match status" value="1"/>
</dbReference>
<dbReference type="PANTHER" id="PTHR43651:SF3">
    <property type="entry name" value="1,4-ALPHA-GLUCAN-BRANCHING ENZYME"/>
    <property type="match status" value="1"/>
</dbReference>
<dbReference type="Pfam" id="PF00128">
    <property type="entry name" value="Alpha-amylase"/>
    <property type="match status" value="2"/>
</dbReference>
<dbReference type="Pfam" id="PF02806">
    <property type="entry name" value="Alpha-amylase_C"/>
    <property type="match status" value="1"/>
</dbReference>
<dbReference type="Pfam" id="PF02922">
    <property type="entry name" value="CBM_48"/>
    <property type="match status" value="1"/>
</dbReference>
<dbReference type="PIRSF" id="PIRSF000463">
    <property type="entry name" value="GlgB"/>
    <property type="match status" value="1"/>
</dbReference>
<dbReference type="SMART" id="SM00642">
    <property type="entry name" value="Aamy"/>
    <property type="match status" value="1"/>
</dbReference>
<dbReference type="SUPFAM" id="SSF51445">
    <property type="entry name" value="(Trans)glycosidases"/>
    <property type="match status" value="1"/>
</dbReference>
<dbReference type="SUPFAM" id="SSF51011">
    <property type="entry name" value="Glycosyl hydrolase domain"/>
    <property type="match status" value="1"/>
</dbReference>
<reference key="1">
    <citation type="journal article" date="2008" name="Chem. Biol. Interact.">
        <title>Extending the Bacillus cereus group genomics to putative food-borne pathogens of different toxicity.</title>
        <authorList>
            <person name="Lapidus A."/>
            <person name="Goltsman E."/>
            <person name="Auger S."/>
            <person name="Galleron N."/>
            <person name="Segurens B."/>
            <person name="Dossat C."/>
            <person name="Land M.L."/>
            <person name="Broussolle V."/>
            <person name="Brillard J."/>
            <person name="Guinebretiere M.-H."/>
            <person name="Sanchis V."/>
            <person name="Nguen-the C."/>
            <person name="Lereclus D."/>
            <person name="Richardson P."/>
            <person name="Wincker P."/>
            <person name="Weissenbach J."/>
            <person name="Ehrlich S.D."/>
            <person name="Sorokin A."/>
        </authorList>
    </citation>
    <scope>NUCLEOTIDE SEQUENCE [LARGE SCALE GENOMIC DNA]</scope>
    <source>
        <strain>KBAB4</strain>
    </source>
</reference>
<accession>A9VMV8</accession>
<name>GLGB_BACMK</name>
<gene>
    <name evidence="1" type="primary">glgB</name>
    <name type="ordered locus">BcerKBAB4_4710</name>
</gene>